<feature type="chain" id="PRO_1000190155" description="Glycerol-3-phosphate dehydrogenase [NAD(P)+]">
    <location>
        <begin position="1"/>
        <end position="336"/>
    </location>
</feature>
<feature type="active site" description="Proton acceptor" evidence="1">
    <location>
        <position position="196"/>
    </location>
</feature>
<feature type="binding site" evidence="1">
    <location>
        <position position="16"/>
    </location>
    <ligand>
        <name>NADPH</name>
        <dbReference type="ChEBI" id="CHEBI:57783"/>
    </ligand>
</feature>
<feature type="binding site" evidence="1">
    <location>
        <position position="17"/>
    </location>
    <ligand>
        <name>NADPH</name>
        <dbReference type="ChEBI" id="CHEBI:57783"/>
    </ligand>
</feature>
<feature type="binding site" evidence="1">
    <location>
        <position position="37"/>
    </location>
    <ligand>
        <name>NADPH</name>
        <dbReference type="ChEBI" id="CHEBI:57783"/>
    </ligand>
</feature>
<feature type="binding site" evidence="1">
    <location>
        <position position="111"/>
    </location>
    <ligand>
        <name>NADPH</name>
        <dbReference type="ChEBI" id="CHEBI:57783"/>
    </ligand>
</feature>
<feature type="binding site" evidence="1">
    <location>
        <position position="111"/>
    </location>
    <ligand>
        <name>sn-glycerol 3-phosphate</name>
        <dbReference type="ChEBI" id="CHEBI:57597"/>
    </ligand>
</feature>
<feature type="binding site" evidence="1">
    <location>
        <position position="140"/>
    </location>
    <ligand>
        <name>sn-glycerol 3-phosphate</name>
        <dbReference type="ChEBI" id="CHEBI:57597"/>
    </ligand>
</feature>
<feature type="binding site" evidence="1">
    <location>
        <position position="142"/>
    </location>
    <ligand>
        <name>sn-glycerol 3-phosphate</name>
        <dbReference type="ChEBI" id="CHEBI:57597"/>
    </ligand>
</feature>
<feature type="binding site" evidence="1">
    <location>
        <position position="144"/>
    </location>
    <ligand>
        <name>NADPH</name>
        <dbReference type="ChEBI" id="CHEBI:57783"/>
    </ligand>
</feature>
<feature type="binding site" evidence="1">
    <location>
        <position position="196"/>
    </location>
    <ligand>
        <name>sn-glycerol 3-phosphate</name>
        <dbReference type="ChEBI" id="CHEBI:57597"/>
    </ligand>
</feature>
<feature type="binding site" evidence="1">
    <location>
        <position position="249"/>
    </location>
    <ligand>
        <name>sn-glycerol 3-phosphate</name>
        <dbReference type="ChEBI" id="CHEBI:57597"/>
    </ligand>
</feature>
<feature type="binding site" evidence="1">
    <location>
        <position position="259"/>
    </location>
    <ligand>
        <name>sn-glycerol 3-phosphate</name>
        <dbReference type="ChEBI" id="CHEBI:57597"/>
    </ligand>
</feature>
<feature type="binding site" evidence="1">
    <location>
        <position position="260"/>
    </location>
    <ligand>
        <name>NADPH</name>
        <dbReference type="ChEBI" id="CHEBI:57783"/>
    </ligand>
</feature>
<feature type="binding site" evidence="1">
    <location>
        <position position="260"/>
    </location>
    <ligand>
        <name>sn-glycerol 3-phosphate</name>
        <dbReference type="ChEBI" id="CHEBI:57597"/>
    </ligand>
</feature>
<feature type="binding site" evidence="1">
    <location>
        <position position="261"/>
    </location>
    <ligand>
        <name>sn-glycerol 3-phosphate</name>
        <dbReference type="ChEBI" id="CHEBI:57597"/>
    </ligand>
</feature>
<feature type="binding site" evidence="1">
    <location>
        <position position="284"/>
    </location>
    <ligand>
        <name>NADPH</name>
        <dbReference type="ChEBI" id="CHEBI:57783"/>
    </ligand>
</feature>
<feature type="binding site" evidence="1">
    <location>
        <position position="286"/>
    </location>
    <ligand>
        <name>NADPH</name>
        <dbReference type="ChEBI" id="CHEBI:57783"/>
    </ligand>
</feature>
<name>GPDA_GLAP5</name>
<evidence type="ECO:0000255" key="1">
    <source>
        <dbReference type="HAMAP-Rule" id="MF_00394"/>
    </source>
</evidence>
<comment type="function">
    <text evidence="1">Catalyzes the reduction of the glycolytic intermediate dihydroxyacetone phosphate (DHAP) to sn-glycerol 3-phosphate (G3P), the key precursor for phospholipid synthesis.</text>
</comment>
<comment type="catalytic activity">
    <reaction evidence="1">
        <text>sn-glycerol 3-phosphate + NAD(+) = dihydroxyacetone phosphate + NADH + H(+)</text>
        <dbReference type="Rhea" id="RHEA:11092"/>
        <dbReference type="ChEBI" id="CHEBI:15378"/>
        <dbReference type="ChEBI" id="CHEBI:57540"/>
        <dbReference type="ChEBI" id="CHEBI:57597"/>
        <dbReference type="ChEBI" id="CHEBI:57642"/>
        <dbReference type="ChEBI" id="CHEBI:57945"/>
        <dbReference type="EC" id="1.1.1.94"/>
    </reaction>
    <physiologicalReaction direction="right-to-left" evidence="1">
        <dbReference type="Rhea" id="RHEA:11094"/>
    </physiologicalReaction>
</comment>
<comment type="catalytic activity">
    <reaction evidence="1">
        <text>sn-glycerol 3-phosphate + NADP(+) = dihydroxyacetone phosphate + NADPH + H(+)</text>
        <dbReference type="Rhea" id="RHEA:11096"/>
        <dbReference type="ChEBI" id="CHEBI:15378"/>
        <dbReference type="ChEBI" id="CHEBI:57597"/>
        <dbReference type="ChEBI" id="CHEBI:57642"/>
        <dbReference type="ChEBI" id="CHEBI:57783"/>
        <dbReference type="ChEBI" id="CHEBI:58349"/>
        <dbReference type="EC" id="1.1.1.94"/>
    </reaction>
    <physiologicalReaction direction="right-to-left" evidence="1">
        <dbReference type="Rhea" id="RHEA:11098"/>
    </physiologicalReaction>
</comment>
<comment type="pathway">
    <text evidence="1">Membrane lipid metabolism; glycerophospholipid metabolism.</text>
</comment>
<comment type="subcellular location">
    <subcellularLocation>
        <location evidence="1">Cytoplasm</location>
    </subcellularLocation>
</comment>
<comment type="similarity">
    <text evidence="1">Belongs to the NAD-dependent glycerol-3-phosphate dehydrogenase family.</text>
</comment>
<protein>
    <recommendedName>
        <fullName evidence="1">Glycerol-3-phosphate dehydrogenase [NAD(P)+]</fullName>
        <ecNumber evidence="1">1.1.1.94</ecNumber>
    </recommendedName>
    <alternativeName>
        <fullName evidence="1">NAD(P)(+)-dependent glycerol-3-phosphate dehydrogenase</fullName>
    </alternativeName>
    <alternativeName>
        <fullName evidence="1">NAD(P)H-dependent dihydroxyacetone-phosphate reductase</fullName>
    </alternativeName>
</protein>
<sequence length="336" mass="36504">MEKIYSAPITVLGAGSYGTALAIALSRNGHKTYLWGHNPQKMAQMAVRRMSEEFLPDIPFPEALEIESDLATALTRSKDILIVVPSHVFSEVLQQIQPLLTSEHRIMWATKGLERDTGRLLQEVALQILGDRYPLAVLSGPTFAKELAQGLPTAIALSSTDPQFADEMQQRIHCSKAFRVYLNSDMVGVQLGGAIKNVIAIGTGISDGMGFGANARTALITRGLAEISRLGLSLGANPTTFIGMAGLGDLVLTCTDNQSRNRRFGLMLGQGRNAQEAMAEIGQVVEGFYNTKEAYLLAQKQGIEMPIVEQIYQILFCGKHASDVAKTLLGRERKGE</sequence>
<accession>B8F6W7</accession>
<proteinExistence type="inferred from homology"/>
<reference key="1">
    <citation type="journal article" date="2009" name="J. Bacteriol.">
        <title>Complete genome sequence of Haemophilus parasuis SH0165.</title>
        <authorList>
            <person name="Yue M."/>
            <person name="Yang F."/>
            <person name="Yang J."/>
            <person name="Bei W."/>
            <person name="Cai X."/>
            <person name="Chen L."/>
            <person name="Dong J."/>
            <person name="Zhou R."/>
            <person name="Jin M."/>
            <person name="Jin Q."/>
            <person name="Chen H."/>
        </authorList>
    </citation>
    <scope>NUCLEOTIDE SEQUENCE [LARGE SCALE GENOMIC DNA]</scope>
    <source>
        <strain>SH0165</strain>
    </source>
</reference>
<gene>
    <name evidence="1" type="primary">gpsA</name>
    <name type="ordered locus">HAPS_1513</name>
</gene>
<organism>
    <name type="scientific">Glaesserella parasuis serovar 5 (strain SH0165)</name>
    <name type="common">Haemophilus parasuis</name>
    <dbReference type="NCBI Taxonomy" id="557723"/>
    <lineage>
        <taxon>Bacteria</taxon>
        <taxon>Pseudomonadati</taxon>
        <taxon>Pseudomonadota</taxon>
        <taxon>Gammaproteobacteria</taxon>
        <taxon>Pasteurellales</taxon>
        <taxon>Pasteurellaceae</taxon>
        <taxon>Glaesserella</taxon>
    </lineage>
</organism>
<keyword id="KW-0963">Cytoplasm</keyword>
<keyword id="KW-0444">Lipid biosynthesis</keyword>
<keyword id="KW-0443">Lipid metabolism</keyword>
<keyword id="KW-0520">NAD</keyword>
<keyword id="KW-0521">NADP</keyword>
<keyword id="KW-0547">Nucleotide-binding</keyword>
<keyword id="KW-0560">Oxidoreductase</keyword>
<keyword id="KW-0594">Phospholipid biosynthesis</keyword>
<keyword id="KW-1208">Phospholipid metabolism</keyword>
<keyword id="KW-1185">Reference proteome</keyword>
<dbReference type="EC" id="1.1.1.94" evidence="1"/>
<dbReference type="EMBL" id="CP001321">
    <property type="protein sequence ID" value="ACL33069.1"/>
    <property type="molecule type" value="Genomic_DNA"/>
</dbReference>
<dbReference type="RefSeq" id="WP_010786424.1">
    <property type="nucleotide sequence ID" value="NC_011852.1"/>
</dbReference>
<dbReference type="SMR" id="B8F6W7"/>
<dbReference type="STRING" id="557723.HAPS_1513"/>
<dbReference type="KEGG" id="hap:HAPS_1513"/>
<dbReference type="HOGENOM" id="CLU_033449_0_2_6"/>
<dbReference type="UniPathway" id="UPA00940"/>
<dbReference type="Proteomes" id="UP000006743">
    <property type="component" value="Chromosome"/>
</dbReference>
<dbReference type="GO" id="GO:0005829">
    <property type="term" value="C:cytosol"/>
    <property type="evidence" value="ECO:0007669"/>
    <property type="project" value="TreeGrafter"/>
</dbReference>
<dbReference type="GO" id="GO:0047952">
    <property type="term" value="F:glycerol-3-phosphate dehydrogenase [NAD(P)+] activity"/>
    <property type="evidence" value="ECO:0007669"/>
    <property type="project" value="UniProtKB-UniRule"/>
</dbReference>
<dbReference type="GO" id="GO:0051287">
    <property type="term" value="F:NAD binding"/>
    <property type="evidence" value="ECO:0007669"/>
    <property type="project" value="InterPro"/>
</dbReference>
<dbReference type="GO" id="GO:0005975">
    <property type="term" value="P:carbohydrate metabolic process"/>
    <property type="evidence" value="ECO:0007669"/>
    <property type="project" value="InterPro"/>
</dbReference>
<dbReference type="GO" id="GO:0046167">
    <property type="term" value="P:glycerol-3-phosphate biosynthetic process"/>
    <property type="evidence" value="ECO:0007669"/>
    <property type="project" value="UniProtKB-UniRule"/>
</dbReference>
<dbReference type="GO" id="GO:0046168">
    <property type="term" value="P:glycerol-3-phosphate catabolic process"/>
    <property type="evidence" value="ECO:0007669"/>
    <property type="project" value="InterPro"/>
</dbReference>
<dbReference type="GO" id="GO:0046474">
    <property type="term" value="P:glycerophospholipid biosynthetic process"/>
    <property type="evidence" value="ECO:0007669"/>
    <property type="project" value="TreeGrafter"/>
</dbReference>
<dbReference type="FunFam" id="1.10.1040.10:FF:000001">
    <property type="entry name" value="Glycerol-3-phosphate dehydrogenase [NAD(P)+]"/>
    <property type="match status" value="1"/>
</dbReference>
<dbReference type="FunFam" id="3.40.50.720:FF:000019">
    <property type="entry name" value="Glycerol-3-phosphate dehydrogenase [NAD(P)+]"/>
    <property type="match status" value="1"/>
</dbReference>
<dbReference type="Gene3D" id="1.10.1040.10">
    <property type="entry name" value="N-(1-d-carboxylethyl)-l-norvaline Dehydrogenase, domain 2"/>
    <property type="match status" value="1"/>
</dbReference>
<dbReference type="Gene3D" id="3.40.50.720">
    <property type="entry name" value="NAD(P)-binding Rossmann-like Domain"/>
    <property type="match status" value="1"/>
</dbReference>
<dbReference type="HAMAP" id="MF_00394">
    <property type="entry name" value="NAD_Glyc3P_dehydrog"/>
    <property type="match status" value="1"/>
</dbReference>
<dbReference type="InterPro" id="IPR008927">
    <property type="entry name" value="6-PGluconate_DH-like_C_sf"/>
</dbReference>
<dbReference type="InterPro" id="IPR013328">
    <property type="entry name" value="6PGD_dom2"/>
</dbReference>
<dbReference type="InterPro" id="IPR006168">
    <property type="entry name" value="G3P_DH_NAD-dep"/>
</dbReference>
<dbReference type="InterPro" id="IPR006109">
    <property type="entry name" value="G3P_DH_NAD-dep_C"/>
</dbReference>
<dbReference type="InterPro" id="IPR011128">
    <property type="entry name" value="G3P_DH_NAD-dep_N"/>
</dbReference>
<dbReference type="InterPro" id="IPR036291">
    <property type="entry name" value="NAD(P)-bd_dom_sf"/>
</dbReference>
<dbReference type="NCBIfam" id="NF000939">
    <property type="entry name" value="PRK00094.1-1"/>
    <property type="match status" value="1"/>
</dbReference>
<dbReference type="NCBIfam" id="NF000940">
    <property type="entry name" value="PRK00094.1-2"/>
    <property type="match status" value="1"/>
</dbReference>
<dbReference type="NCBIfam" id="NF000942">
    <property type="entry name" value="PRK00094.1-4"/>
    <property type="match status" value="1"/>
</dbReference>
<dbReference type="PANTHER" id="PTHR11728">
    <property type="entry name" value="GLYCEROL-3-PHOSPHATE DEHYDROGENASE"/>
    <property type="match status" value="1"/>
</dbReference>
<dbReference type="PANTHER" id="PTHR11728:SF1">
    <property type="entry name" value="GLYCEROL-3-PHOSPHATE DEHYDROGENASE [NAD(+)] 2, CHLOROPLASTIC"/>
    <property type="match status" value="1"/>
</dbReference>
<dbReference type="Pfam" id="PF07479">
    <property type="entry name" value="NAD_Gly3P_dh_C"/>
    <property type="match status" value="1"/>
</dbReference>
<dbReference type="Pfam" id="PF01210">
    <property type="entry name" value="NAD_Gly3P_dh_N"/>
    <property type="match status" value="1"/>
</dbReference>
<dbReference type="PIRSF" id="PIRSF000114">
    <property type="entry name" value="Glycerol-3-P_dh"/>
    <property type="match status" value="1"/>
</dbReference>
<dbReference type="PRINTS" id="PR00077">
    <property type="entry name" value="GPDHDRGNASE"/>
</dbReference>
<dbReference type="SUPFAM" id="SSF48179">
    <property type="entry name" value="6-phosphogluconate dehydrogenase C-terminal domain-like"/>
    <property type="match status" value="1"/>
</dbReference>
<dbReference type="SUPFAM" id="SSF51735">
    <property type="entry name" value="NAD(P)-binding Rossmann-fold domains"/>
    <property type="match status" value="1"/>
</dbReference>
<dbReference type="PROSITE" id="PS00957">
    <property type="entry name" value="NAD_G3PDH"/>
    <property type="match status" value="1"/>
</dbReference>